<comment type="function">
    <text evidence="1">Binds together with bS18 to 16S ribosomal RNA.</text>
</comment>
<comment type="similarity">
    <text evidence="1">Belongs to the bacterial ribosomal protein bS6 family.</text>
</comment>
<name>RS6_DEIDV</name>
<sequence length="102" mass="11735">MNQYDLNLILNPNLSAEQVQIEKDYIETALKNVGAEVSNLDDLGNRRLAYQVGKDREGYYLMYTIKAGGNPEKDIASSLRLRDHVRRVLVVKDRPEWKTKKA</sequence>
<proteinExistence type="inferred from homology"/>
<protein>
    <recommendedName>
        <fullName evidence="1">Small ribosomal subunit protein bS6</fullName>
    </recommendedName>
    <alternativeName>
        <fullName evidence="2">30S ribosomal protein S6</fullName>
    </alternativeName>
</protein>
<dbReference type="EMBL" id="CP001114">
    <property type="protein sequence ID" value="ACO44808.1"/>
    <property type="molecule type" value="Genomic_DNA"/>
</dbReference>
<dbReference type="RefSeq" id="WP_012691931.1">
    <property type="nucleotide sequence ID" value="NC_012526.1"/>
</dbReference>
<dbReference type="SMR" id="C1CXK2"/>
<dbReference type="STRING" id="546414.Deide_00130"/>
<dbReference type="PaxDb" id="546414-Deide_00130"/>
<dbReference type="KEGG" id="ddr:Deide_00130"/>
<dbReference type="eggNOG" id="COG0360">
    <property type="taxonomic scope" value="Bacteria"/>
</dbReference>
<dbReference type="HOGENOM" id="CLU_113441_5_3_0"/>
<dbReference type="OrthoDB" id="9812702at2"/>
<dbReference type="Proteomes" id="UP000002208">
    <property type="component" value="Chromosome"/>
</dbReference>
<dbReference type="GO" id="GO:0005737">
    <property type="term" value="C:cytoplasm"/>
    <property type="evidence" value="ECO:0007669"/>
    <property type="project" value="UniProtKB-ARBA"/>
</dbReference>
<dbReference type="GO" id="GO:1990904">
    <property type="term" value="C:ribonucleoprotein complex"/>
    <property type="evidence" value="ECO:0007669"/>
    <property type="project" value="UniProtKB-KW"/>
</dbReference>
<dbReference type="GO" id="GO:0005840">
    <property type="term" value="C:ribosome"/>
    <property type="evidence" value="ECO:0007669"/>
    <property type="project" value="UniProtKB-KW"/>
</dbReference>
<dbReference type="GO" id="GO:0070181">
    <property type="term" value="F:small ribosomal subunit rRNA binding"/>
    <property type="evidence" value="ECO:0007669"/>
    <property type="project" value="TreeGrafter"/>
</dbReference>
<dbReference type="GO" id="GO:0003735">
    <property type="term" value="F:structural constituent of ribosome"/>
    <property type="evidence" value="ECO:0007669"/>
    <property type="project" value="InterPro"/>
</dbReference>
<dbReference type="GO" id="GO:0006412">
    <property type="term" value="P:translation"/>
    <property type="evidence" value="ECO:0007669"/>
    <property type="project" value="UniProtKB-UniRule"/>
</dbReference>
<dbReference type="CDD" id="cd00473">
    <property type="entry name" value="bS6"/>
    <property type="match status" value="1"/>
</dbReference>
<dbReference type="Gene3D" id="3.30.70.60">
    <property type="match status" value="1"/>
</dbReference>
<dbReference type="HAMAP" id="MF_00360">
    <property type="entry name" value="Ribosomal_bS6"/>
    <property type="match status" value="1"/>
</dbReference>
<dbReference type="InterPro" id="IPR000529">
    <property type="entry name" value="Ribosomal_bS6"/>
</dbReference>
<dbReference type="InterPro" id="IPR035980">
    <property type="entry name" value="Ribosomal_bS6_sf"/>
</dbReference>
<dbReference type="InterPro" id="IPR020814">
    <property type="entry name" value="Ribosomal_S6_plastid/chlpt"/>
</dbReference>
<dbReference type="InterPro" id="IPR014717">
    <property type="entry name" value="Transl_elong_EF1B/ribsomal_bS6"/>
</dbReference>
<dbReference type="NCBIfam" id="TIGR00166">
    <property type="entry name" value="S6"/>
    <property type="match status" value="1"/>
</dbReference>
<dbReference type="PANTHER" id="PTHR21011">
    <property type="entry name" value="MITOCHONDRIAL 28S RIBOSOMAL PROTEIN S6"/>
    <property type="match status" value="1"/>
</dbReference>
<dbReference type="PANTHER" id="PTHR21011:SF1">
    <property type="entry name" value="SMALL RIBOSOMAL SUBUNIT PROTEIN BS6M"/>
    <property type="match status" value="1"/>
</dbReference>
<dbReference type="Pfam" id="PF01250">
    <property type="entry name" value="Ribosomal_S6"/>
    <property type="match status" value="1"/>
</dbReference>
<dbReference type="SUPFAM" id="SSF54995">
    <property type="entry name" value="Ribosomal protein S6"/>
    <property type="match status" value="1"/>
</dbReference>
<feature type="chain" id="PRO_1000205392" description="Small ribosomal subunit protein bS6">
    <location>
        <begin position="1"/>
        <end position="102"/>
    </location>
</feature>
<keyword id="KW-1185">Reference proteome</keyword>
<keyword id="KW-0687">Ribonucleoprotein</keyword>
<keyword id="KW-0689">Ribosomal protein</keyword>
<keyword id="KW-0694">RNA-binding</keyword>
<keyword id="KW-0699">rRNA-binding</keyword>
<evidence type="ECO:0000255" key="1">
    <source>
        <dbReference type="HAMAP-Rule" id="MF_00360"/>
    </source>
</evidence>
<evidence type="ECO:0000305" key="2"/>
<reference key="1">
    <citation type="journal article" date="2009" name="PLoS Genet.">
        <title>Alliance of proteomics and genomics to unravel the specificities of Sahara bacterium Deinococcus deserti.</title>
        <authorList>
            <person name="de Groot A."/>
            <person name="Dulermo R."/>
            <person name="Ortet P."/>
            <person name="Blanchard L."/>
            <person name="Guerin P."/>
            <person name="Fernandez B."/>
            <person name="Vacherie B."/>
            <person name="Dossat C."/>
            <person name="Jolivet E."/>
            <person name="Siguier P."/>
            <person name="Chandler M."/>
            <person name="Barakat M."/>
            <person name="Dedieu A."/>
            <person name="Barbe V."/>
            <person name="Heulin T."/>
            <person name="Sommer S."/>
            <person name="Achouak W."/>
            <person name="Armengaud J."/>
        </authorList>
    </citation>
    <scope>NUCLEOTIDE SEQUENCE [LARGE SCALE GENOMIC DNA]</scope>
    <source>
        <strain>DSM 17065 / CIP 109153 / LMG 22923 / VCD115</strain>
    </source>
</reference>
<organism>
    <name type="scientific">Deinococcus deserti (strain DSM 17065 / CIP 109153 / LMG 22923 / VCD115)</name>
    <dbReference type="NCBI Taxonomy" id="546414"/>
    <lineage>
        <taxon>Bacteria</taxon>
        <taxon>Thermotogati</taxon>
        <taxon>Deinococcota</taxon>
        <taxon>Deinococci</taxon>
        <taxon>Deinococcales</taxon>
        <taxon>Deinococcaceae</taxon>
        <taxon>Deinococcus</taxon>
    </lineage>
</organism>
<accession>C1CXK2</accession>
<gene>
    <name evidence="1" type="primary">rpsF</name>
    <name type="ordered locus">Deide_00130</name>
</gene>